<accession>Q2P829</accession>
<reference key="1">
    <citation type="journal article" date="2005" name="Jpn. Agric. Res. Q.">
        <title>Genome sequence of Xanthomonas oryzae pv. oryzae suggests contribution of large numbers of effector genes and insertion sequences to its race diversity.</title>
        <authorList>
            <person name="Ochiai H."/>
            <person name="Inoue Y."/>
            <person name="Takeya M."/>
            <person name="Sasaki A."/>
            <person name="Kaku H."/>
        </authorList>
    </citation>
    <scope>NUCLEOTIDE SEQUENCE [LARGE SCALE GENOMIC DNA]</scope>
    <source>
        <strain>MAFF 311018</strain>
    </source>
</reference>
<protein>
    <recommendedName>
        <fullName evidence="1">Protein Smg homolog</fullName>
    </recommendedName>
</protein>
<sequence>MKESILDVLLYLFEHYFSEDADLVRDRDSLQNGLIQAGFSPAEISKAFDWLDALSEQRPSVARPHVDGPVRIYHGQELDKLDVDCRGFLLFLEQHRILDADQRELVLDRAMALDQDELDLDDLKWVVLMVLFNQPGAEAAYAWMETQMFLDEPEPVH</sequence>
<evidence type="ECO:0000255" key="1">
    <source>
        <dbReference type="HAMAP-Rule" id="MF_00598"/>
    </source>
</evidence>
<proteinExistence type="inferred from homology"/>
<feature type="chain" id="PRO_1000025681" description="Protein Smg homolog">
    <location>
        <begin position="1"/>
        <end position="157"/>
    </location>
</feature>
<comment type="similarity">
    <text evidence="1">Belongs to the Smg family.</text>
</comment>
<name>SMG_XANOM</name>
<gene>
    <name evidence="1" type="primary">smg</name>
    <name type="ordered locus">XOO0543</name>
</gene>
<dbReference type="EMBL" id="AP008229">
    <property type="protein sequence ID" value="BAE67298.1"/>
    <property type="molecule type" value="Genomic_DNA"/>
</dbReference>
<dbReference type="RefSeq" id="WP_011257490.1">
    <property type="nucleotide sequence ID" value="NC_007705.1"/>
</dbReference>
<dbReference type="SMR" id="Q2P829"/>
<dbReference type="KEGG" id="xom:XOO0543"/>
<dbReference type="HOGENOM" id="CLU_133242_0_0_6"/>
<dbReference type="HAMAP" id="MF_00598">
    <property type="entry name" value="Smg"/>
    <property type="match status" value="1"/>
</dbReference>
<dbReference type="InterPro" id="IPR007456">
    <property type="entry name" value="Smg"/>
</dbReference>
<dbReference type="NCBIfam" id="NF002897">
    <property type="entry name" value="PRK03430.1"/>
    <property type="match status" value="1"/>
</dbReference>
<dbReference type="PANTHER" id="PTHR38692">
    <property type="entry name" value="PROTEIN SMG"/>
    <property type="match status" value="1"/>
</dbReference>
<dbReference type="PANTHER" id="PTHR38692:SF1">
    <property type="entry name" value="PROTEIN SMG"/>
    <property type="match status" value="1"/>
</dbReference>
<dbReference type="Pfam" id="PF04361">
    <property type="entry name" value="DUF494"/>
    <property type="match status" value="1"/>
</dbReference>
<organism>
    <name type="scientific">Xanthomonas oryzae pv. oryzae (strain MAFF 311018)</name>
    <dbReference type="NCBI Taxonomy" id="342109"/>
    <lineage>
        <taxon>Bacteria</taxon>
        <taxon>Pseudomonadati</taxon>
        <taxon>Pseudomonadota</taxon>
        <taxon>Gammaproteobacteria</taxon>
        <taxon>Lysobacterales</taxon>
        <taxon>Lysobacteraceae</taxon>
        <taxon>Xanthomonas</taxon>
    </lineage>
</organism>